<keyword id="KW-0028">Amino-acid biosynthesis</keyword>
<keyword id="KW-0368">Histidine biosynthesis</keyword>
<keyword id="KW-0378">Hydrolase</keyword>
<keyword id="KW-0486">Methionine biosynthesis</keyword>
<keyword id="KW-0511">Multifunctional enzyme</keyword>
<keyword id="KW-0521">NADP</keyword>
<keyword id="KW-0554">One-carbon metabolism</keyword>
<keyword id="KW-0560">Oxidoreductase</keyword>
<keyword id="KW-0658">Purine biosynthesis</keyword>
<proteinExistence type="inferred from homology"/>
<evidence type="ECO:0000255" key="1">
    <source>
        <dbReference type="HAMAP-Rule" id="MF_01576"/>
    </source>
</evidence>
<gene>
    <name evidence="1" type="primary">folD</name>
    <name type="ordered locus">KPK_4195</name>
</gene>
<comment type="function">
    <text evidence="1">Catalyzes the oxidation of 5,10-methylenetetrahydrofolate to 5,10-methenyltetrahydrofolate and then the hydrolysis of 5,10-methenyltetrahydrofolate to 10-formyltetrahydrofolate.</text>
</comment>
<comment type="catalytic activity">
    <reaction evidence="1">
        <text>(6R)-5,10-methylene-5,6,7,8-tetrahydrofolate + NADP(+) = (6R)-5,10-methenyltetrahydrofolate + NADPH</text>
        <dbReference type="Rhea" id="RHEA:22812"/>
        <dbReference type="ChEBI" id="CHEBI:15636"/>
        <dbReference type="ChEBI" id="CHEBI:57455"/>
        <dbReference type="ChEBI" id="CHEBI:57783"/>
        <dbReference type="ChEBI" id="CHEBI:58349"/>
        <dbReference type="EC" id="1.5.1.5"/>
    </reaction>
</comment>
<comment type="catalytic activity">
    <reaction evidence="1">
        <text>(6R)-5,10-methenyltetrahydrofolate + H2O = (6R)-10-formyltetrahydrofolate + H(+)</text>
        <dbReference type="Rhea" id="RHEA:23700"/>
        <dbReference type="ChEBI" id="CHEBI:15377"/>
        <dbReference type="ChEBI" id="CHEBI:15378"/>
        <dbReference type="ChEBI" id="CHEBI:57455"/>
        <dbReference type="ChEBI" id="CHEBI:195366"/>
        <dbReference type="EC" id="3.5.4.9"/>
    </reaction>
</comment>
<comment type="pathway">
    <text evidence="1">One-carbon metabolism; tetrahydrofolate interconversion.</text>
</comment>
<comment type="subunit">
    <text evidence="1">Homodimer.</text>
</comment>
<comment type="similarity">
    <text evidence="1">Belongs to the tetrahydrofolate dehydrogenase/cyclohydrolase family.</text>
</comment>
<feature type="chain" id="PRO_1000196784" description="Bifunctional protein FolD">
    <location>
        <begin position="1"/>
        <end position="288"/>
    </location>
</feature>
<feature type="binding site" evidence="1">
    <location>
        <begin position="166"/>
        <end position="168"/>
    </location>
    <ligand>
        <name>NADP(+)</name>
        <dbReference type="ChEBI" id="CHEBI:58349"/>
    </ligand>
</feature>
<feature type="binding site" evidence="1">
    <location>
        <position position="232"/>
    </location>
    <ligand>
        <name>NADP(+)</name>
        <dbReference type="ChEBI" id="CHEBI:58349"/>
    </ligand>
</feature>
<dbReference type="EC" id="1.5.1.5" evidence="1"/>
<dbReference type="EC" id="3.5.4.9" evidence="1"/>
<dbReference type="EMBL" id="CP000964">
    <property type="protein sequence ID" value="ACI07517.1"/>
    <property type="molecule type" value="Genomic_DNA"/>
</dbReference>
<dbReference type="SMR" id="B5Y0K4"/>
<dbReference type="KEGG" id="kpe:KPK_4195"/>
<dbReference type="HOGENOM" id="CLU_034045_2_1_6"/>
<dbReference type="UniPathway" id="UPA00193"/>
<dbReference type="Proteomes" id="UP000001734">
    <property type="component" value="Chromosome"/>
</dbReference>
<dbReference type="GO" id="GO:0005829">
    <property type="term" value="C:cytosol"/>
    <property type="evidence" value="ECO:0007669"/>
    <property type="project" value="TreeGrafter"/>
</dbReference>
<dbReference type="GO" id="GO:0004477">
    <property type="term" value="F:methenyltetrahydrofolate cyclohydrolase activity"/>
    <property type="evidence" value="ECO:0007669"/>
    <property type="project" value="UniProtKB-UniRule"/>
</dbReference>
<dbReference type="GO" id="GO:0004488">
    <property type="term" value="F:methylenetetrahydrofolate dehydrogenase (NADP+) activity"/>
    <property type="evidence" value="ECO:0007669"/>
    <property type="project" value="UniProtKB-UniRule"/>
</dbReference>
<dbReference type="GO" id="GO:0000105">
    <property type="term" value="P:L-histidine biosynthetic process"/>
    <property type="evidence" value="ECO:0007669"/>
    <property type="project" value="UniProtKB-KW"/>
</dbReference>
<dbReference type="GO" id="GO:0009086">
    <property type="term" value="P:methionine biosynthetic process"/>
    <property type="evidence" value="ECO:0007669"/>
    <property type="project" value="UniProtKB-KW"/>
</dbReference>
<dbReference type="GO" id="GO:0006164">
    <property type="term" value="P:purine nucleotide biosynthetic process"/>
    <property type="evidence" value="ECO:0007669"/>
    <property type="project" value="UniProtKB-KW"/>
</dbReference>
<dbReference type="GO" id="GO:0035999">
    <property type="term" value="P:tetrahydrofolate interconversion"/>
    <property type="evidence" value="ECO:0007669"/>
    <property type="project" value="UniProtKB-UniRule"/>
</dbReference>
<dbReference type="CDD" id="cd01080">
    <property type="entry name" value="NAD_bind_m-THF_DH_Cyclohyd"/>
    <property type="match status" value="1"/>
</dbReference>
<dbReference type="FunFam" id="3.40.50.10860:FF:000001">
    <property type="entry name" value="Bifunctional protein FolD"/>
    <property type="match status" value="1"/>
</dbReference>
<dbReference type="FunFam" id="3.40.50.720:FF:000006">
    <property type="entry name" value="Bifunctional protein FolD"/>
    <property type="match status" value="1"/>
</dbReference>
<dbReference type="Gene3D" id="3.40.50.10860">
    <property type="entry name" value="Leucine Dehydrogenase, chain A, domain 1"/>
    <property type="match status" value="1"/>
</dbReference>
<dbReference type="Gene3D" id="3.40.50.720">
    <property type="entry name" value="NAD(P)-binding Rossmann-like Domain"/>
    <property type="match status" value="1"/>
</dbReference>
<dbReference type="HAMAP" id="MF_01576">
    <property type="entry name" value="THF_DHG_CYH"/>
    <property type="match status" value="1"/>
</dbReference>
<dbReference type="InterPro" id="IPR046346">
    <property type="entry name" value="Aminoacid_DH-like_N_sf"/>
</dbReference>
<dbReference type="InterPro" id="IPR036291">
    <property type="entry name" value="NAD(P)-bd_dom_sf"/>
</dbReference>
<dbReference type="InterPro" id="IPR000672">
    <property type="entry name" value="THF_DH/CycHdrlase"/>
</dbReference>
<dbReference type="InterPro" id="IPR020630">
    <property type="entry name" value="THF_DH/CycHdrlase_cat_dom"/>
</dbReference>
<dbReference type="InterPro" id="IPR020867">
    <property type="entry name" value="THF_DH/CycHdrlase_CS"/>
</dbReference>
<dbReference type="InterPro" id="IPR020631">
    <property type="entry name" value="THF_DH/CycHdrlase_NAD-bd_dom"/>
</dbReference>
<dbReference type="NCBIfam" id="NF008058">
    <property type="entry name" value="PRK10792.1"/>
    <property type="match status" value="1"/>
</dbReference>
<dbReference type="NCBIfam" id="NF010783">
    <property type="entry name" value="PRK14186.1"/>
    <property type="match status" value="1"/>
</dbReference>
<dbReference type="PANTHER" id="PTHR48099:SF5">
    <property type="entry name" value="C-1-TETRAHYDROFOLATE SYNTHASE, CYTOPLASMIC"/>
    <property type="match status" value="1"/>
</dbReference>
<dbReference type="PANTHER" id="PTHR48099">
    <property type="entry name" value="C-1-TETRAHYDROFOLATE SYNTHASE, CYTOPLASMIC-RELATED"/>
    <property type="match status" value="1"/>
</dbReference>
<dbReference type="Pfam" id="PF00763">
    <property type="entry name" value="THF_DHG_CYH"/>
    <property type="match status" value="1"/>
</dbReference>
<dbReference type="Pfam" id="PF02882">
    <property type="entry name" value="THF_DHG_CYH_C"/>
    <property type="match status" value="1"/>
</dbReference>
<dbReference type="PRINTS" id="PR00085">
    <property type="entry name" value="THFDHDRGNASE"/>
</dbReference>
<dbReference type="SUPFAM" id="SSF53223">
    <property type="entry name" value="Aminoacid dehydrogenase-like, N-terminal domain"/>
    <property type="match status" value="1"/>
</dbReference>
<dbReference type="SUPFAM" id="SSF51735">
    <property type="entry name" value="NAD(P)-binding Rossmann-fold domains"/>
    <property type="match status" value="1"/>
</dbReference>
<dbReference type="PROSITE" id="PS00766">
    <property type="entry name" value="THF_DHG_CYH_1"/>
    <property type="match status" value="1"/>
</dbReference>
<dbReference type="PROSITE" id="PS00767">
    <property type="entry name" value="THF_DHG_CYH_2"/>
    <property type="match status" value="1"/>
</dbReference>
<reference key="1">
    <citation type="journal article" date="2008" name="PLoS Genet.">
        <title>Complete genome sequence of the N2-fixing broad host range endophyte Klebsiella pneumoniae 342 and virulence predictions verified in mice.</title>
        <authorList>
            <person name="Fouts D.E."/>
            <person name="Tyler H.L."/>
            <person name="DeBoy R.T."/>
            <person name="Daugherty S."/>
            <person name="Ren Q."/>
            <person name="Badger J.H."/>
            <person name="Durkin A.S."/>
            <person name="Huot H."/>
            <person name="Shrivastava S."/>
            <person name="Kothari S."/>
            <person name="Dodson R.J."/>
            <person name="Mohamoud Y."/>
            <person name="Khouri H."/>
            <person name="Roesch L.F.W."/>
            <person name="Krogfelt K.A."/>
            <person name="Struve C."/>
            <person name="Triplett E.W."/>
            <person name="Methe B.A."/>
        </authorList>
    </citation>
    <scope>NUCLEOTIDE SEQUENCE [LARGE SCALE GENOMIC DNA]</scope>
    <source>
        <strain>342</strain>
    </source>
</reference>
<sequence length="288" mass="30974">MAAKIIDGKTIAQQVRSEVAEKVKARVAAGKRAPGLAVVLVGSNPASQIYVGSKRKACEEVGFVSRSYDLPETTSEAELLELIDTLNADKTIDGILVQLPLPAGIDNVKVLERIAPDKDVDGFHPYNVGRLCQRAPRLRPCTPRGIVTLLERYNIDTYGLNAVVIGASNIVGRPMSMELLLAGCTTTVTHRFTKNLRHHVENADLLIVAVGKPGFIPGEWIKEGAIVVDVGINRLESGKVVGDVVYEDAAERASYITPVPGGVGPMTVATLIQNTLQACEEYHDVEEA</sequence>
<organism>
    <name type="scientific">Klebsiella pneumoniae (strain 342)</name>
    <dbReference type="NCBI Taxonomy" id="507522"/>
    <lineage>
        <taxon>Bacteria</taxon>
        <taxon>Pseudomonadati</taxon>
        <taxon>Pseudomonadota</taxon>
        <taxon>Gammaproteobacteria</taxon>
        <taxon>Enterobacterales</taxon>
        <taxon>Enterobacteriaceae</taxon>
        <taxon>Klebsiella/Raoultella group</taxon>
        <taxon>Klebsiella</taxon>
        <taxon>Klebsiella pneumoniae complex</taxon>
    </lineage>
</organism>
<accession>B5Y0K4</accession>
<protein>
    <recommendedName>
        <fullName evidence="1">Bifunctional protein FolD</fullName>
    </recommendedName>
    <domain>
        <recommendedName>
            <fullName evidence="1">Methylenetetrahydrofolate dehydrogenase</fullName>
            <ecNumber evidence="1">1.5.1.5</ecNumber>
        </recommendedName>
    </domain>
    <domain>
        <recommendedName>
            <fullName evidence="1">Methenyltetrahydrofolate cyclohydrolase</fullName>
            <ecNumber evidence="1">3.5.4.9</ecNumber>
        </recommendedName>
    </domain>
</protein>
<name>FOLD_KLEP3</name>